<keyword id="KW-0963">Cytoplasm</keyword>
<keyword id="KW-0378">Hydrolase</keyword>
<keyword id="KW-0479">Metal-binding</keyword>
<keyword id="KW-0547">Nucleotide-binding</keyword>
<name>SURE_THEM4</name>
<comment type="function">
    <text evidence="1">Nucleotidase that shows phosphatase activity on nucleoside 5'-monophosphates.</text>
</comment>
<comment type="catalytic activity">
    <reaction evidence="1">
        <text>a ribonucleoside 5'-phosphate + H2O = a ribonucleoside + phosphate</text>
        <dbReference type="Rhea" id="RHEA:12484"/>
        <dbReference type="ChEBI" id="CHEBI:15377"/>
        <dbReference type="ChEBI" id="CHEBI:18254"/>
        <dbReference type="ChEBI" id="CHEBI:43474"/>
        <dbReference type="ChEBI" id="CHEBI:58043"/>
        <dbReference type="EC" id="3.1.3.5"/>
    </reaction>
</comment>
<comment type="cofactor">
    <cofactor evidence="1">
        <name>a divalent metal cation</name>
        <dbReference type="ChEBI" id="CHEBI:60240"/>
    </cofactor>
    <text evidence="1">Binds 1 divalent metal cation per subunit.</text>
</comment>
<comment type="subcellular location">
    <subcellularLocation>
        <location evidence="1">Cytoplasm</location>
    </subcellularLocation>
</comment>
<comment type="similarity">
    <text evidence="1">Belongs to the SurE nucleotidase family.</text>
</comment>
<feature type="chain" id="PRO_1000007795" description="5'-nucleotidase SurE">
    <location>
        <begin position="1"/>
        <end position="255"/>
    </location>
</feature>
<feature type="binding site" evidence="1">
    <location>
        <position position="8"/>
    </location>
    <ligand>
        <name>a divalent metal cation</name>
        <dbReference type="ChEBI" id="CHEBI:60240"/>
    </ligand>
</feature>
<feature type="binding site" evidence="1">
    <location>
        <position position="9"/>
    </location>
    <ligand>
        <name>a divalent metal cation</name>
        <dbReference type="ChEBI" id="CHEBI:60240"/>
    </ligand>
</feature>
<feature type="binding site" evidence="1">
    <location>
        <position position="39"/>
    </location>
    <ligand>
        <name>a divalent metal cation</name>
        <dbReference type="ChEBI" id="CHEBI:60240"/>
    </ligand>
</feature>
<feature type="binding site" evidence="1">
    <location>
        <position position="95"/>
    </location>
    <ligand>
        <name>a divalent metal cation</name>
        <dbReference type="ChEBI" id="CHEBI:60240"/>
    </ligand>
</feature>
<sequence length="255" mass="28595">MNILVTNDDGVTADGILCLARYLSKKHEVTVVAPETEQSAVGHAITLRFPLWLRKIDINEEFEIYAVSGTPADCVKMGIDVVLKEKPDLLISGINRGNNLGTDVVYSGTVSGALEGAIAGVPSIAISSFSFENPLYETAAKFILEFLEEFDVKSIPRFTALNINVPSVPYGELKGWKLTRQSKRMYEDYFEQRKDPSGGNYYWMMGNIIENDPDPKADYKAVAEKYVSVTPISVFLTNEEYLKRLEERYEDKAIR</sequence>
<accession>A6LL96</accession>
<organism>
    <name type="scientific">Thermosipho melanesiensis (strain DSM 12029 / CIP 104789 / BI429)</name>
    <dbReference type="NCBI Taxonomy" id="391009"/>
    <lineage>
        <taxon>Bacteria</taxon>
        <taxon>Thermotogati</taxon>
        <taxon>Thermotogota</taxon>
        <taxon>Thermotogae</taxon>
        <taxon>Thermotogales</taxon>
        <taxon>Fervidobacteriaceae</taxon>
        <taxon>Thermosipho</taxon>
    </lineage>
</organism>
<gene>
    <name evidence="1" type="primary">surE</name>
    <name type="ordered locus">Tmel_0836</name>
</gene>
<reference key="1">
    <citation type="submission" date="2007-05" db="EMBL/GenBank/DDBJ databases">
        <title>Complete sequence of Thermosipho melanesiensis BI429.</title>
        <authorList>
            <consortium name="US DOE Joint Genome Institute"/>
            <person name="Copeland A."/>
            <person name="Lucas S."/>
            <person name="Lapidus A."/>
            <person name="Barry K."/>
            <person name="Glavina del Rio T."/>
            <person name="Dalin E."/>
            <person name="Tice H."/>
            <person name="Pitluck S."/>
            <person name="Chertkov O."/>
            <person name="Brettin T."/>
            <person name="Bruce D."/>
            <person name="Detter J.C."/>
            <person name="Han C."/>
            <person name="Schmutz J."/>
            <person name="Larimer F."/>
            <person name="Land M."/>
            <person name="Hauser L."/>
            <person name="Kyrpides N."/>
            <person name="Mikhailova N."/>
            <person name="Nelson K."/>
            <person name="Gogarten J.P."/>
            <person name="Noll K."/>
            <person name="Richardson P."/>
        </authorList>
    </citation>
    <scope>NUCLEOTIDE SEQUENCE [LARGE SCALE GENOMIC DNA]</scope>
    <source>
        <strain>DSM 12029 / CIP 104789 / BI429</strain>
    </source>
</reference>
<protein>
    <recommendedName>
        <fullName evidence="1">5'-nucleotidase SurE</fullName>
        <ecNumber evidence="1">3.1.3.5</ecNumber>
    </recommendedName>
    <alternativeName>
        <fullName evidence="1">Nucleoside 5'-monophosphate phosphohydrolase</fullName>
    </alternativeName>
</protein>
<evidence type="ECO:0000255" key="1">
    <source>
        <dbReference type="HAMAP-Rule" id="MF_00060"/>
    </source>
</evidence>
<proteinExistence type="inferred from homology"/>
<dbReference type="EC" id="3.1.3.5" evidence="1"/>
<dbReference type="EMBL" id="CP000716">
    <property type="protein sequence ID" value="ABR30697.1"/>
    <property type="molecule type" value="Genomic_DNA"/>
</dbReference>
<dbReference type="RefSeq" id="WP_012057058.1">
    <property type="nucleotide sequence ID" value="NC_009616.1"/>
</dbReference>
<dbReference type="SMR" id="A6LL96"/>
<dbReference type="STRING" id="391009.Tmel_0836"/>
<dbReference type="KEGG" id="tme:Tmel_0836"/>
<dbReference type="eggNOG" id="COG0496">
    <property type="taxonomic scope" value="Bacteria"/>
</dbReference>
<dbReference type="HOGENOM" id="CLU_045192_1_3_0"/>
<dbReference type="OrthoDB" id="9780815at2"/>
<dbReference type="Proteomes" id="UP000001110">
    <property type="component" value="Chromosome"/>
</dbReference>
<dbReference type="GO" id="GO:0005737">
    <property type="term" value="C:cytoplasm"/>
    <property type="evidence" value="ECO:0007669"/>
    <property type="project" value="UniProtKB-SubCell"/>
</dbReference>
<dbReference type="GO" id="GO:0008254">
    <property type="term" value="F:3'-nucleotidase activity"/>
    <property type="evidence" value="ECO:0007669"/>
    <property type="project" value="TreeGrafter"/>
</dbReference>
<dbReference type="GO" id="GO:0008253">
    <property type="term" value="F:5'-nucleotidase activity"/>
    <property type="evidence" value="ECO:0007669"/>
    <property type="project" value="UniProtKB-UniRule"/>
</dbReference>
<dbReference type="GO" id="GO:0004309">
    <property type="term" value="F:exopolyphosphatase activity"/>
    <property type="evidence" value="ECO:0007669"/>
    <property type="project" value="TreeGrafter"/>
</dbReference>
<dbReference type="GO" id="GO:0046872">
    <property type="term" value="F:metal ion binding"/>
    <property type="evidence" value="ECO:0007669"/>
    <property type="project" value="UniProtKB-UniRule"/>
</dbReference>
<dbReference type="GO" id="GO:0000166">
    <property type="term" value="F:nucleotide binding"/>
    <property type="evidence" value="ECO:0007669"/>
    <property type="project" value="UniProtKB-KW"/>
</dbReference>
<dbReference type="FunFam" id="3.40.1210.10:FF:000001">
    <property type="entry name" value="5'/3'-nucleotidase SurE"/>
    <property type="match status" value="1"/>
</dbReference>
<dbReference type="Gene3D" id="3.40.1210.10">
    <property type="entry name" value="Survival protein SurE-like phosphatase/nucleotidase"/>
    <property type="match status" value="1"/>
</dbReference>
<dbReference type="HAMAP" id="MF_00060">
    <property type="entry name" value="SurE"/>
    <property type="match status" value="1"/>
</dbReference>
<dbReference type="InterPro" id="IPR030048">
    <property type="entry name" value="SurE"/>
</dbReference>
<dbReference type="InterPro" id="IPR002828">
    <property type="entry name" value="SurE-like_Pase/nucleotidase"/>
</dbReference>
<dbReference type="InterPro" id="IPR036523">
    <property type="entry name" value="SurE-like_sf"/>
</dbReference>
<dbReference type="NCBIfam" id="NF001490">
    <property type="entry name" value="PRK00346.1-4"/>
    <property type="match status" value="1"/>
</dbReference>
<dbReference type="NCBIfam" id="NF001492">
    <property type="entry name" value="PRK00346.2-2"/>
    <property type="match status" value="1"/>
</dbReference>
<dbReference type="NCBIfam" id="NF010545">
    <property type="entry name" value="PRK13935.1"/>
    <property type="match status" value="1"/>
</dbReference>
<dbReference type="NCBIfam" id="TIGR00087">
    <property type="entry name" value="surE"/>
    <property type="match status" value="1"/>
</dbReference>
<dbReference type="PANTHER" id="PTHR30457">
    <property type="entry name" value="5'-NUCLEOTIDASE SURE"/>
    <property type="match status" value="1"/>
</dbReference>
<dbReference type="PANTHER" id="PTHR30457:SF12">
    <property type="entry name" value="5'_3'-NUCLEOTIDASE SURE"/>
    <property type="match status" value="1"/>
</dbReference>
<dbReference type="Pfam" id="PF01975">
    <property type="entry name" value="SurE"/>
    <property type="match status" value="1"/>
</dbReference>
<dbReference type="SUPFAM" id="SSF64167">
    <property type="entry name" value="SurE-like"/>
    <property type="match status" value="1"/>
</dbReference>